<comment type="function">
    <text evidence="1">Involved in the biosynthesis of branched-chain amino acids (BCAA). Catalyzes an alkyl-migration followed by a ketol-acid reduction of (S)-2-acetolactate (S2AL) to yield (R)-2,3-dihydroxy-isovalerate. In the isomerase reaction, S2AL is rearranged via a Mg-dependent methyl migration to produce 3-hydroxy-3-methyl-2-ketobutyrate (HMKB). In the reductase reaction, this 2-ketoacid undergoes a metal-dependent reduction by NADPH to yield (R)-2,3-dihydroxy-isovalerate.</text>
</comment>
<comment type="catalytic activity">
    <reaction evidence="1">
        <text>(2R)-2,3-dihydroxy-3-methylbutanoate + NADP(+) = (2S)-2-acetolactate + NADPH + H(+)</text>
        <dbReference type="Rhea" id="RHEA:22068"/>
        <dbReference type="ChEBI" id="CHEBI:15378"/>
        <dbReference type="ChEBI" id="CHEBI:49072"/>
        <dbReference type="ChEBI" id="CHEBI:57783"/>
        <dbReference type="ChEBI" id="CHEBI:58349"/>
        <dbReference type="ChEBI" id="CHEBI:58476"/>
        <dbReference type="EC" id="1.1.1.86"/>
    </reaction>
</comment>
<comment type="catalytic activity">
    <reaction evidence="1">
        <text>(2R,3R)-2,3-dihydroxy-3-methylpentanoate + NADP(+) = (S)-2-ethyl-2-hydroxy-3-oxobutanoate + NADPH + H(+)</text>
        <dbReference type="Rhea" id="RHEA:13493"/>
        <dbReference type="ChEBI" id="CHEBI:15378"/>
        <dbReference type="ChEBI" id="CHEBI:49256"/>
        <dbReference type="ChEBI" id="CHEBI:49258"/>
        <dbReference type="ChEBI" id="CHEBI:57783"/>
        <dbReference type="ChEBI" id="CHEBI:58349"/>
        <dbReference type="EC" id="1.1.1.86"/>
    </reaction>
</comment>
<comment type="cofactor">
    <cofactor evidence="1">
        <name>Mg(2+)</name>
        <dbReference type="ChEBI" id="CHEBI:18420"/>
    </cofactor>
    <text evidence="1">Binds 2 magnesium ions per subunit.</text>
</comment>
<comment type="pathway">
    <text evidence="1">Amino-acid biosynthesis; L-isoleucine biosynthesis; L-isoleucine from 2-oxobutanoate: step 2/4.</text>
</comment>
<comment type="pathway">
    <text evidence="1">Amino-acid biosynthesis; L-valine biosynthesis; L-valine from pyruvate: step 2/4.</text>
</comment>
<comment type="similarity">
    <text evidence="1">Belongs to the ketol-acid reductoisomerase family.</text>
</comment>
<dbReference type="EC" id="1.1.1.86" evidence="1"/>
<dbReference type="EMBL" id="CU468230">
    <property type="protein sequence ID" value="CAP02264.1"/>
    <property type="molecule type" value="Genomic_DNA"/>
</dbReference>
<dbReference type="SMR" id="B0VKP5"/>
<dbReference type="KEGG" id="abm:ABSDF2975"/>
<dbReference type="HOGENOM" id="CLU_033821_0_1_6"/>
<dbReference type="UniPathway" id="UPA00047">
    <property type="reaction ID" value="UER00056"/>
</dbReference>
<dbReference type="UniPathway" id="UPA00049">
    <property type="reaction ID" value="UER00060"/>
</dbReference>
<dbReference type="Proteomes" id="UP000001741">
    <property type="component" value="Chromosome"/>
</dbReference>
<dbReference type="GO" id="GO:0005829">
    <property type="term" value="C:cytosol"/>
    <property type="evidence" value="ECO:0007669"/>
    <property type="project" value="TreeGrafter"/>
</dbReference>
<dbReference type="GO" id="GO:0004455">
    <property type="term" value="F:ketol-acid reductoisomerase activity"/>
    <property type="evidence" value="ECO:0007669"/>
    <property type="project" value="UniProtKB-UniRule"/>
</dbReference>
<dbReference type="GO" id="GO:0000287">
    <property type="term" value="F:magnesium ion binding"/>
    <property type="evidence" value="ECO:0007669"/>
    <property type="project" value="UniProtKB-UniRule"/>
</dbReference>
<dbReference type="GO" id="GO:0050661">
    <property type="term" value="F:NADP binding"/>
    <property type="evidence" value="ECO:0007669"/>
    <property type="project" value="InterPro"/>
</dbReference>
<dbReference type="GO" id="GO:0009097">
    <property type="term" value="P:isoleucine biosynthetic process"/>
    <property type="evidence" value="ECO:0007669"/>
    <property type="project" value="UniProtKB-UniRule"/>
</dbReference>
<dbReference type="GO" id="GO:0009099">
    <property type="term" value="P:L-valine biosynthetic process"/>
    <property type="evidence" value="ECO:0007669"/>
    <property type="project" value="UniProtKB-UniRule"/>
</dbReference>
<dbReference type="FunFam" id="3.40.50.720:FF:000023">
    <property type="entry name" value="Ketol-acid reductoisomerase (NADP(+))"/>
    <property type="match status" value="1"/>
</dbReference>
<dbReference type="Gene3D" id="6.10.240.10">
    <property type="match status" value="1"/>
</dbReference>
<dbReference type="Gene3D" id="3.40.50.720">
    <property type="entry name" value="NAD(P)-binding Rossmann-like Domain"/>
    <property type="match status" value="1"/>
</dbReference>
<dbReference type="HAMAP" id="MF_00435">
    <property type="entry name" value="IlvC"/>
    <property type="match status" value="1"/>
</dbReference>
<dbReference type="InterPro" id="IPR008927">
    <property type="entry name" value="6-PGluconate_DH-like_C_sf"/>
</dbReference>
<dbReference type="InterPro" id="IPR013023">
    <property type="entry name" value="KARI"/>
</dbReference>
<dbReference type="InterPro" id="IPR000506">
    <property type="entry name" value="KARI_C"/>
</dbReference>
<dbReference type="InterPro" id="IPR013116">
    <property type="entry name" value="KARI_N"/>
</dbReference>
<dbReference type="InterPro" id="IPR014359">
    <property type="entry name" value="KARI_prok"/>
</dbReference>
<dbReference type="InterPro" id="IPR036291">
    <property type="entry name" value="NAD(P)-bd_dom_sf"/>
</dbReference>
<dbReference type="NCBIfam" id="TIGR00465">
    <property type="entry name" value="ilvC"/>
    <property type="match status" value="1"/>
</dbReference>
<dbReference type="NCBIfam" id="NF004017">
    <property type="entry name" value="PRK05479.1"/>
    <property type="match status" value="1"/>
</dbReference>
<dbReference type="NCBIfam" id="NF009940">
    <property type="entry name" value="PRK13403.1"/>
    <property type="match status" value="1"/>
</dbReference>
<dbReference type="PANTHER" id="PTHR21371">
    <property type="entry name" value="KETOL-ACID REDUCTOISOMERASE, MITOCHONDRIAL"/>
    <property type="match status" value="1"/>
</dbReference>
<dbReference type="PANTHER" id="PTHR21371:SF1">
    <property type="entry name" value="KETOL-ACID REDUCTOISOMERASE, MITOCHONDRIAL"/>
    <property type="match status" value="1"/>
</dbReference>
<dbReference type="Pfam" id="PF01450">
    <property type="entry name" value="KARI_C"/>
    <property type="match status" value="1"/>
</dbReference>
<dbReference type="Pfam" id="PF07991">
    <property type="entry name" value="KARI_N"/>
    <property type="match status" value="1"/>
</dbReference>
<dbReference type="PIRSF" id="PIRSF000116">
    <property type="entry name" value="IlvC_gammaproteo"/>
    <property type="match status" value="1"/>
</dbReference>
<dbReference type="SUPFAM" id="SSF48179">
    <property type="entry name" value="6-phosphogluconate dehydrogenase C-terminal domain-like"/>
    <property type="match status" value="1"/>
</dbReference>
<dbReference type="SUPFAM" id="SSF51735">
    <property type="entry name" value="NAD(P)-binding Rossmann-fold domains"/>
    <property type="match status" value="1"/>
</dbReference>
<dbReference type="PROSITE" id="PS51851">
    <property type="entry name" value="KARI_C"/>
    <property type="match status" value="1"/>
</dbReference>
<dbReference type="PROSITE" id="PS51850">
    <property type="entry name" value="KARI_N"/>
    <property type="match status" value="1"/>
</dbReference>
<sequence>MQIFYDKDCDLSIIQSKKVAIIGYGSQGHAHALNLKDSGVDVTVGLRAGSASWKKAENAGLKVAEVPAAVKQADLVMILTPDEFQSQLYRDVIEPNIKEGATLAFAHGFSVLYNQVVPRKDLDVIMVAPKAPGHTVRSEFQRGSGVPDLIAIHQDASGNARNVALSYASGVGGGRTGIIETSFREETETDLFGEQAVLCGGAVELVKMGFETLVEAGYAPEMAYFECLHELKLIVDLMFEGGIADMNYSVSNNAEYGEYVTGPEVINEQSREAMRNALKRIQSGEYAKMFIQEGALNYPSMTARRRQNAAHGIEQTGAKLRAMMPWIQANKIVDKEKN</sequence>
<name>ILVC_ACIBS</name>
<evidence type="ECO:0000255" key="1">
    <source>
        <dbReference type="HAMAP-Rule" id="MF_00435"/>
    </source>
</evidence>
<evidence type="ECO:0000255" key="2">
    <source>
        <dbReference type="PROSITE-ProRule" id="PRU01197"/>
    </source>
</evidence>
<evidence type="ECO:0000255" key="3">
    <source>
        <dbReference type="PROSITE-ProRule" id="PRU01198"/>
    </source>
</evidence>
<organism>
    <name type="scientific">Acinetobacter baumannii (strain SDF)</name>
    <dbReference type="NCBI Taxonomy" id="509170"/>
    <lineage>
        <taxon>Bacteria</taxon>
        <taxon>Pseudomonadati</taxon>
        <taxon>Pseudomonadota</taxon>
        <taxon>Gammaproteobacteria</taxon>
        <taxon>Moraxellales</taxon>
        <taxon>Moraxellaceae</taxon>
        <taxon>Acinetobacter</taxon>
        <taxon>Acinetobacter calcoaceticus/baumannii complex</taxon>
    </lineage>
</organism>
<accession>B0VKP5</accession>
<proteinExistence type="inferred from homology"/>
<protein>
    <recommendedName>
        <fullName evidence="1">Ketol-acid reductoisomerase (NADP(+))</fullName>
        <shortName evidence="1">KARI</shortName>
        <ecNumber evidence="1">1.1.1.86</ecNumber>
    </recommendedName>
    <alternativeName>
        <fullName evidence="1">Acetohydroxy-acid isomeroreductase</fullName>
        <shortName evidence="1">AHIR</shortName>
    </alternativeName>
    <alternativeName>
        <fullName evidence="1">Alpha-keto-beta-hydroxylacyl reductoisomerase</fullName>
    </alternativeName>
    <alternativeName>
        <fullName evidence="1">Ketol-acid reductoisomerase type 1</fullName>
    </alternativeName>
    <alternativeName>
        <fullName evidence="1">Ketol-acid reductoisomerase type I</fullName>
    </alternativeName>
</protein>
<feature type="chain" id="PRO_1000124243" description="Ketol-acid reductoisomerase (NADP(+))">
    <location>
        <begin position="1"/>
        <end position="338"/>
    </location>
</feature>
<feature type="domain" description="KARI N-terminal Rossmann" evidence="2">
    <location>
        <begin position="1"/>
        <end position="181"/>
    </location>
</feature>
<feature type="domain" description="KARI C-terminal knotted" evidence="3">
    <location>
        <begin position="182"/>
        <end position="327"/>
    </location>
</feature>
<feature type="active site" evidence="1">
    <location>
        <position position="107"/>
    </location>
</feature>
<feature type="binding site" evidence="1">
    <location>
        <begin position="24"/>
        <end position="27"/>
    </location>
    <ligand>
        <name>NADP(+)</name>
        <dbReference type="ChEBI" id="CHEBI:58349"/>
    </ligand>
</feature>
<feature type="binding site" evidence="1">
    <location>
        <position position="47"/>
    </location>
    <ligand>
        <name>NADP(+)</name>
        <dbReference type="ChEBI" id="CHEBI:58349"/>
    </ligand>
</feature>
<feature type="binding site" evidence="1">
    <location>
        <position position="50"/>
    </location>
    <ligand>
        <name>NADP(+)</name>
        <dbReference type="ChEBI" id="CHEBI:58349"/>
    </ligand>
</feature>
<feature type="binding site" evidence="1">
    <location>
        <position position="52"/>
    </location>
    <ligand>
        <name>NADP(+)</name>
        <dbReference type="ChEBI" id="CHEBI:58349"/>
    </ligand>
</feature>
<feature type="binding site" evidence="1">
    <location>
        <begin position="82"/>
        <end position="85"/>
    </location>
    <ligand>
        <name>NADP(+)</name>
        <dbReference type="ChEBI" id="CHEBI:58349"/>
    </ligand>
</feature>
<feature type="binding site" evidence="1">
    <location>
        <position position="133"/>
    </location>
    <ligand>
        <name>NADP(+)</name>
        <dbReference type="ChEBI" id="CHEBI:58349"/>
    </ligand>
</feature>
<feature type="binding site" evidence="1">
    <location>
        <position position="190"/>
    </location>
    <ligand>
        <name>Mg(2+)</name>
        <dbReference type="ChEBI" id="CHEBI:18420"/>
        <label>1</label>
    </ligand>
</feature>
<feature type="binding site" evidence="1">
    <location>
        <position position="190"/>
    </location>
    <ligand>
        <name>Mg(2+)</name>
        <dbReference type="ChEBI" id="CHEBI:18420"/>
        <label>2</label>
    </ligand>
</feature>
<feature type="binding site" evidence="1">
    <location>
        <position position="194"/>
    </location>
    <ligand>
        <name>Mg(2+)</name>
        <dbReference type="ChEBI" id="CHEBI:18420"/>
        <label>1</label>
    </ligand>
</feature>
<feature type="binding site" evidence="1">
    <location>
        <position position="226"/>
    </location>
    <ligand>
        <name>Mg(2+)</name>
        <dbReference type="ChEBI" id="CHEBI:18420"/>
        <label>2</label>
    </ligand>
</feature>
<feature type="binding site" evidence="1">
    <location>
        <position position="230"/>
    </location>
    <ligand>
        <name>Mg(2+)</name>
        <dbReference type="ChEBI" id="CHEBI:18420"/>
        <label>2</label>
    </ligand>
</feature>
<feature type="binding site" evidence="1">
    <location>
        <position position="251"/>
    </location>
    <ligand>
        <name>substrate</name>
    </ligand>
</feature>
<gene>
    <name evidence="1" type="primary">ilvC</name>
    <name type="ordered locus">ABSDF2975</name>
</gene>
<reference key="1">
    <citation type="journal article" date="2008" name="PLoS ONE">
        <title>Comparative analysis of Acinetobacters: three genomes for three lifestyles.</title>
        <authorList>
            <person name="Vallenet D."/>
            <person name="Nordmann P."/>
            <person name="Barbe V."/>
            <person name="Poirel L."/>
            <person name="Mangenot S."/>
            <person name="Bataille E."/>
            <person name="Dossat C."/>
            <person name="Gas S."/>
            <person name="Kreimeyer A."/>
            <person name="Lenoble P."/>
            <person name="Oztas S."/>
            <person name="Poulain J."/>
            <person name="Segurens B."/>
            <person name="Robert C."/>
            <person name="Abergel C."/>
            <person name="Claverie J.-M."/>
            <person name="Raoult D."/>
            <person name="Medigue C."/>
            <person name="Weissenbach J."/>
            <person name="Cruveiller S."/>
        </authorList>
    </citation>
    <scope>NUCLEOTIDE SEQUENCE [LARGE SCALE GENOMIC DNA]</scope>
    <source>
        <strain>SDF</strain>
    </source>
</reference>
<keyword id="KW-0028">Amino-acid biosynthesis</keyword>
<keyword id="KW-0100">Branched-chain amino acid biosynthesis</keyword>
<keyword id="KW-0460">Magnesium</keyword>
<keyword id="KW-0479">Metal-binding</keyword>
<keyword id="KW-0521">NADP</keyword>
<keyword id="KW-0560">Oxidoreductase</keyword>